<name>TSAD_STRPF</name>
<dbReference type="EC" id="2.3.1.234" evidence="1"/>
<dbReference type="EMBL" id="CP000262">
    <property type="protein sequence ID" value="ABF38599.1"/>
    <property type="molecule type" value="Genomic_DNA"/>
</dbReference>
<dbReference type="SMR" id="Q1J4Y7"/>
<dbReference type="KEGG" id="spi:MGAS10750_Spy1649"/>
<dbReference type="HOGENOM" id="CLU_023208_0_2_9"/>
<dbReference type="Proteomes" id="UP000002434">
    <property type="component" value="Chromosome"/>
</dbReference>
<dbReference type="GO" id="GO:0005737">
    <property type="term" value="C:cytoplasm"/>
    <property type="evidence" value="ECO:0007669"/>
    <property type="project" value="UniProtKB-SubCell"/>
</dbReference>
<dbReference type="GO" id="GO:0005506">
    <property type="term" value="F:iron ion binding"/>
    <property type="evidence" value="ECO:0007669"/>
    <property type="project" value="UniProtKB-UniRule"/>
</dbReference>
<dbReference type="GO" id="GO:0061711">
    <property type="term" value="F:N(6)-L-threonylcarbamoyladenine synthase activity"/>
    <property type="evidence" value="ECO:0007669"/>
    <property type="project" value="UniProtKB-EC"/>
</dbReference>
<dbReference type="GO" id="GO:0002949">
    <property type="term" value="P:tRNA threonylcarbamoyladenosine modification"/>
    <property type="evidence" value="ECO:0007669"/>
    <property type="project" value="UniProtKB-UniRule"/>
</dbReference>
<dbReference type="CDD" id="cd24133">
    <property type="entry name" value="ASKHA_NBD_TsaD_bac"/>
    <property type="match status" value="1"/>
</dbReference>
<dbReference type="FunFam" id="3.30.420.40:FF:000012">
    <property type="entry name" value="tRNA N6-adenosine threonylcarbamoyltransferase"/>
    <property type="match status" value="1"/>
</dbReference>
<dbReference type="FunFam" id="3.30.420.40:FF:000040">
    <property type="entry name" value="tRNA N6-adenosine threonylcarbamoyltransferase"/>
    <property type="match status" value="1"/>
</dbReference>
<dbReference type="Gene3D" id="3.30.420.40">
    <property type="match status" value="2"/>
</dbReference>
<dbReference type="HAMAP" id="MF_01445">
    <property type="entry name" value="TsaD"/>
    <property type="match status" value="1"/>
</dbReference>
<dbReference type="InterPro" id="IPR043129">
    <property type="entry name" value="ATPase_NBD"/>
</dbReference>
<dbReference type="InterPro" id="IPR000905">
    <property type="entry name" value="Gcp-like_dom"/>
</dbReference>
<dbReference type="InterPro" id="IPR017861">
    <property type="entry name" value="KAE1/TsaD"/>
</dbReference>
<dbReference type="InterPro" id="IPR022450">
    <property type="entry name" value="TsaD"/>
</dbReference>
<dbReference type="NCBIfam" id="TIGR00329">
    <property type="entry name" value="gcp_kae1"/>
    <property type="match status" value="1"/>
</dbReference>
<dbReference type="NCBIfam" id="TIGR03723">
    <property type="entry name" value="T6A_TsaD_YgjD"/>
    <property type="match status" value="1"/>
</dbReference>
<dbReference type="PANTHER" id="PTHR11735">
    <property type="entry name" value="TRNA N6-ADENOSINE THREONYLCARBAMOYLTRANSFERASE"/>
    <property type="match status" value="1"/>
</dbReference>
<dbReference type="PANTHER" id="PTHR11735:SF6">
    <property type="entry name" value="TRNA N6-ADENOSINE THREONYLCARBAMOYLTRANSFERASE, MITOCHONDRIAL"/>
    <property type="match status" value="1"/>
</dbReference>
<dbReference type="Pfam" id="PF00814">
    <property type="entry name" value="TsaD"/>
    <property type="match status" value="1"/>
</dbReference>
<dbReference type="PRINTS" id="PR00789">
    <property type="entry name" value="OSIALOPTASE"/>
</dbReference>
<dbReference type="SUPFAM" id="SSF53067">
    <property type="entry name" value="Actin-like ATPase domain"/>
    <property type="match status" value="1"/>
</dbReference>
<comment type="function">
    <text evidence="1">Required for the formation of a threonylcarbamoyl group on adenosine at position 37 (t(6)A37) in tRNAs that read codons beginning with adenine. Is involved in the transfer of the threonylcarbamoyl moiety of threonylcarbamoyl-AMP (TC-AMP) to the N6 group of A37, together with TsaE and TsaB. TsaD likely plays a direct catalytic role in this reaction.</text>
</comment>
<comment type="catalytic activity">
    <reaction evidence="1">
        <text>L-threonylcarbamoyladenylate + adenosine(37) in tRNA = N(6)-L-threonylcarbamoyladenosine(37) in tRNA + AMP + H(+)</text>
        <dbReference type="Rhea" id="RHEA:37059"/>
        <dbReference type="Rhea" id="RHEA-COMP:10162"/>
        <dbReference type="Rhea" id="RHEA-COMP:10163"/>
        <dbReference type="ChEBI" id="CHEBI:15378"/>
        <dbReference type="ChEBI" id="CHEBI:73682"/>
        <dbReference type="ChEBI" id="CHEBI:74411"/>
        <dbReference type="ChEBI" id="CHEBI:74418"/>
        <dbReference type="ChEBI" id="CHEBI:456215"/>
        <dbReference type="EC" id="2.3.1.234"/>
    </reaction>
</comment>
<comment type="cofactor">
    <cofactor evidence="1">
        <name>Fe(2+)</name>
        <dbReference type="ChEBI" id="CHEBI:29033"/>
    </cofactor>
    <text evidence="1">Binds 1 Fe(2+) ion per subunit.</text>
</comment>
<comment type="subcellular location">
    <subcellularLocation>
        <location evidence="1">Cytoplasm</location>
    </subcellularLocation>
</comment>
<comment type="similarity">
    <text evidence="1">Belongs to the KAE1 / TsaD family.</text>
</comment>
<gene>
    <name evidence="1" type="primary">tsaD</name>
    <name type="synonym">gcp</name>
    <name type="ordered locus">MGAS10750_Spy1649</name>
</gene>
<feature type="chain" id="PRO_0000303571" description="tRNA N6-adenosine threonylcarbamoyltransferase">
    <location>
        <begin position="1"/>
        <end position="342"/>
    </location>
</feature>
<feature type="binding site" evidence="1">
    <location>
        <position position="114"/>
    </location>
    <ligand>
        <name>Fe cation</name>
        <dbReference type="ChEBI" id="CHEBI:24875"/>
    </ligand>
</feature>
<feature type="binding site" evidence="1">
    <location>
        <position position="118"/>
    </location>
    <ligand>
        <name>Fe cation</name>
        <dbReference type="ChEBI" id="CHEBI:24875"/>
    </ligand>
</feature>
<feature type="binding site" evidence="1">
    <location>
        <begin position="136"/>
        <end position="140"/>
    </location>
    <ligand>
        <name>substrate</name>
    </ligand>
</feature>
<feature type="binding site" evidence="1">
    <location>
        <position position="169"/>
    </location>
    <ligand>
        <name>substrate</name>
    </ligand>
</feature>
<feature type="binding site" evidence="1">
    <location>
        <position position="182"/>
    </location>
    <ligand>
        <name>substrate</name>
    </ligand>
</feature>
<feature type="binding site" evidence="1">
    <location>
        <position position="186"/>
    </location>
    <ligand>
        <name>substrate</name>
    </ligand>
</feature>
<feature type="binding site" evidence="1">
    <location>
        <position position="275"/>
    </location>
    <ligand>
        <name>substrate</name>
    </ligand>
</feature>
<feature type="binding site" evidence="1">
    <location>
        <position position="301"/>
    </location>
    <ligand>
        <name>Fe cation</name>
        <dbReference type="ChEBI" id="CHEBI:24875"/>
    </ligand>
</feature>
<protein>
    <recommendedName>
        <fullName evidence="1">tRNA N6-adenosine threonylcarbamoyltransferase</fullName>
        <ecNumber evidence="1">2.3.1.234</ecNumber>
    </recommendedName>
    <alternativeName>
        <fullName evidence="1">N6-L-threonylcarbamoyladenine synthase</fullName>
        <shortName evidence="1">t(6)A synthase</shortName>
    </alternativeName>
    <alternativeName>
        <fullName evidence="1">t(6)A37 threonylcarbamoyladenosine biosynthesis protein TsaD</fullName>
    </alternativeName>
    <alternativeName>
        <fullName evidence="1">tRNA threonylcarbamoyladenosine biosynthesis protein TsaD</fullName>
    </alternativeName>
</protein>
<sequence>MTDRYILAVESSCDETSVAILKNESTLLSNVIASQVESHKRFGGVVPEVASRHHVEVITTCFEDALQEAGISASDLSAVAVTYGPGLVGALLVGLAAAKAFAWANHLPLIPVNHMAGHLMAAREQKPLVYPLIALLVSGGHTELVYVPEPGDYHIIGETRDDAVGEAYDKVGRVMGLTYPAGREIDQLAHKGQDTYHFPRAMITEDHLEFSFSGLKSAFINLHHNAKQKGNELILEDLCASFQAAVLDILLAKTKKALSRYPAKMLVVAGGVAANQGLRDRLAQEITHIEVVIPKLRLCGDNAGMIALAAAIEYDKQHFANMSLNAKPSLAFDQFPDSFVIN</sequence>
<proteinExistence type="inferred from homology"/>
<organism>
    <name type="scientific">Streptococcus pyogenes serotype M4 (strain MGAS10750)</name>
    <dbReference type="NCBI Taxonomy" id="370554"/>
    <lineage>
        <taxon>Bacteria</taxon>
        <taxon>Bacillati</taxon>
        <taxon>Bacillota</taxon>
        <taxon>Bacilli</taxon>
        <taxon>Lactobacillales</taxon>
        <taxon>Streptococcaceae</taxon>
        <taxon>Streptococcus</taxon>
    </lineage>
</organism>
<evidence type="ECO:0000255" key="1">
    <source>
        <dbReference type="HAMAP-Rule" id="MF_01445"/>
    </source>
</evidence>
<reference key="1">
    <citation type="journal article" date="2006" name="Proc. Natl. Acad. Sci. U.S.A.">
        <title>Molecular genetic anatomy of inter- and intraserotype variation in the human bacterial pathogen group A Streptococcus.</title>
        <authorList>
            <person name="Beres S.B."/>
            <person name="Richter E.W."/>
            <person name="Nagiec M.J."/>
            <person name="Sumby P."/>
            <person name="Porcella S.F."/>
            <person name="DeLeo F.R."/>
            <person name="Musser J.M."/>
        </authorList>
    </citation>
    <scope>NUCLEOTIDE SEQUENCE [LARGE SCALE GENOMIC DNA]</scope>
    <source>
        <strain>MGAS10750</strain>
    </source>
</reference>
<accession>Q1J4Y7</accession>
<keyword id="KW-0012">Acyltransferase</keyword>
<keyword id="KW-0963">Cytoplasm</keyword>
<keyword id="KW-0408">Iron</keyword>
<keyword id="KW-0479">Metal-binding</keyword>
<keyword id="KW-0808">Transferase</keyword>
<keyword id="KW-0819">tRNA processing</keyword>